<reference key="1">
    <citation type="submission" date="2006-08" db="EMBL/GenBank/DDBJ databases">
        <authorList>
            <consortium name="NIH - Mammalian Gene Collection (MGC) project"/>
        </authorList>
    </citation>
    <scope>NUCLEOTIDE SEQUENCE [LARGE SCALE MRNA]</scope>
    <source>
        <strain>Hereford</strain>
        <tissue>Hypothalamus</tissue>
    </source>
</reference>
<proteinExistence type="evidence at transcript level"/>
<comment type="function">
    <text evidence="2">2-oxoglutarate(2OG)-dependent dioxygenase that catalyzes the conversion of 2-oxoglutarate to succinate and CO(2) in an iron-dependent manner. However, does not couple 2OG turnover to the hydroxylation of acyl-coenzyme A derivatives, implying that it is not directly involved in phytanoyl coenzyme-A metabolism. Does not show detectable activity towards fatty acid CoA thioesters.</text>
</comment>
<comment type="cofactor">
    <cofactor evidence="2">
        <name>Fe cation</name>
        <dbReference type="ChEBI" id="CHEBI:24875"/>
    </cofactor>
</comment>
<comment type="similarity">
    <text evidence="3">Belongs to the PhyH family. PHYHD1 subfamily.</text>
</comment>
<keyword id="KW-0223">Dioxygenase</keyword>
<keyword id="KW-0408">Iron</keyword>
<keyword id="KW-0479">Metal-binding</keyword>
<keyword id="KW-0560">Oxidoreductase</keyword>
<keyword id="KW-0597">Phosphoprotein</keyword>
<keyword id="KW-1185">Reference proteome</keyword>
<feature type="chain" id="PRO_0000313632" description="Phytanoyl-CoA dioxygenase domain-containing protein 1">
    <location>
        <begin position="1"/>
        <end position="291"/>
    </location>
</feature>
<feature type="binding site" evidence="1">
    <location>
        <position position="102"/>
    </location>
    <ligand>
        <name>2-oxoglutarate</name>
        <dbReference type="ChEBI" id="CHEBI:16810"/>
    </ligand>
</feature>
<feature type="binding site" evidence="1">
    <location>
        <position position="141"/>
    </location>
    <ligand>
        <name>2-oxoglutarate</name>
        <dbReference type="ChEBI" id="CHEBI:16810"/>
    </ligand>
</feature>
<feature type="binding site" evidence="1">
    <location>
        <begin position="156"/>
        <end position="158"/>
    </location>
    <ligand>
        <name>2-oxoglutarate</name>
        <dbReference type="ChEBI" id="CHEBI:16810"/>
    </ligand>
</feature>
<feature type="binding site" evidence="1">
    <location>
        <position position="156"/>
    </location>
    <ligand>
        <name>Fe cation</name>
        <dbReference type="ChEBI" id="CHEBI:24875"/>
    </ligand>
</feature>
<feature type="binding site" evidence="1">
    <location>
        <position position="158"/>
    </location>
    <ligand>
        <name>Fe cation</name>
        <dbReference type="ChEBI" id="CHEBI:24875"/>
    </ligand>
</feature>
<feature type="binding site" evidence="1">
    <location>
        <position position="174"/>
    </location>
    <ligand>
        <name>2-oxoglutarate</name>
        <dbReference type="ChEBI" id="CHEBI:16810"/>
    </ligand>
</feature>
<feature type="binding site" evidence="1">
    <location>
        <position position="246"/>
    </location>
    <ligand>
        <name>Fe cation</name>
        <dbReference type="ChEBI" id="CHEBI:24875"/>
    </ligand>
</feature>
<feature type="binding site" evidence="1">
    <location>
        <position position="248"/>
    </location>
    <ligand>
        <name>2-oxoglutarate</name>
        <dbReference type="ChEBI" id="CHEBI:16810"/>
    </ligand>
</feature>
<feature type="binding site" evidence="1">
    <location>
        <position position="257"/>
    </location>
    <ligand>
        <name>2-oxoglutarate</name>
        <dbReference type="ChEBI" id="CHEBI:16810"/>
    </ligand>
</feature>
<feature type="modified residue" description="Phosphothreonine" evidence="2">
    <location>
        <position position="55"/>
    </location>
</feature>
<evidence type="ECO:0000250" key="1">
    <source>
        <dbReference type="UniProtKB" id="O14832"/>
    </source>
</evidence>
<evidence type="ECO:0000250" key="2">
    <source>
        <dbReference type="UniProtKB" id="Q5SRE7"/>
    </source>
</evidence>
<evidence type="ECO:0000305" key="3"/>
<dbReference type="EC" id="1.14.11.-" evidence="2"/>
<dbReference type="EMBL" id="BC122727">
    <property type="protein sequence ID" value="AAI22728.1"/>
    <property type="molecule type" value="mRNA"/>
</dbReference>
<dbReference type="RefSeq" id="NP_001069711.1">
    <property type="nucleotide sequence ID" value="NM_001076243.1"/>
</dbReference>
<dbReference type="SMR" id="Q0IIB1"/>
<dbReference type="FunCoup" id="Q0IIB1">
    <property type="interactions" value="1456"/>
</dbReference>
<dbReference type="STRING" id="9913.ENSBTAP00000048693"/>
<dbReference type="PaxDb" id="9913-ENSBTAP00000048693"/>
<dbReference type="GeneID" id="540828"/>
<dbReference type="KEGG" id="bta:540828"/>
<dbReference type="CTD" id="254295"/>
<dbReference type="eggNOG" id="KOG3290">
    <property type="taxonomic scope" value="Eukaryota"/>
</dbReference>
<dbReference type="InParanoid" id="Q0IIB1"/>
<dbReference type="OrthoDB" id="445007at2759"/>
<dbReference type="Proteomes" id="UP000009136">
    <property type="component" value="Unplaced"/>
</dbReference>
<dbReference type="GO" id="GO:0051213">
    <property type="term" value="F:dioxygenase activity"/>
    <property type="evidence" value="ECO:0007669"/>
    <property type="project" value="UniProtKB-KW"/>
</dbReference>
<dbReference type="GO" id="GO:0046872">
    <property type="term" value="F:metal ion binding"/>
    <property type="evidence" value="ECO:0007669"/>
    <property type="project" value="UniProtKB-KW"/>
</dbReference>
<dbReference type="Gene3D" id="2.60.120.620">
    <property type="entry name" value="q2cbj1_9rhob like domain"/>
    <property type="match status" value="1"/>
</dbReference>
<dbReference type="InterPro" id="IPR008775">
    <property type="entry name" value="Phytyl_CoA_dOase-like"/>
</dbReference>
<dbReference type="PANTHER" id="PTHR20883">
    <property type="entry name" value="PHYTANOYL-COA DIOXYGENASE DOMAIN CONTAINING 1"/>
    <property type="match status" value="1"/>
</dbReference>
<dbReference type="PANTHER" id="PTHR20883:SF15">
    <property type="entry name" value="PHYTANOYL-COA DIOXYGENASE DOMAIN-CONTAINING PROTEIN 1"/>
    <property type="match status" value="1"/>
</dbReference>
<dbReference type="Pfam" id="PF05721">
    <property type="entry name" value="PhyH"/>
    <property type="match status" value="1"/>
</dbReference>
<dbReference type="SUPFAM" id="SSF51197">
    <property type="entry name" value="Clavaminate synthase-like"/>
    <property type="match status" value="1"/>
</dbReference>
<name>PHYD1_BOVIN</name>
<gene>
    <name type="primary">PHYHD1</name>
</gene>
<organism>
    <name type="scientific">Bos taurus</name>
    <name type="common">Bovine</name>
    <dbReference type="NCBI Taxonomy" id="9913"/>
    <lineage>
        <taxon>Eukaryota</taxon>
        <taxon>Metazoa</taxon>
        <taxon>Chordata</taxon>
        <taxon>Craniata</taxon>
        <taxon>Vertebrata</taxon>
        <taxon>Euteleostomi</taxon>
        <taxon>Mammalia</taxon>
        <taxon>Eutheria</taxon>
        <taxon>Laurasiatheria</taxon>
        <taxon>Artiodactyla</taxon>
        <taxon>Ruminantia</taxon>
        <taxon>Pecora</taxon>
        <taxon>Bovidae</taxon>
        <taxon>Bovinae</taxon>
        <taxon>Bos</taxon>
    </lineage>
</organism>
<accession>Q0IIB1</accession>
<protein>
    <recommendedName>
        <fullName evidence="2">Phytanoyl-CoA dioxygenase domain-containing protein 1</fullName>
        <shortName evidence="2">Protein PHYHD1</shortName>
        <ecNumber evidence="2">1.14.11.-</ecNumber>
    </recommendedName>
</protein>
<sequence>MACLSPSQLQKFQEDGFLVLEGFLSADECEAMQRRIDEIVAKMDVPLHCRTEFSTQEEEQLRAQGSTDYFLSSGDKIRFFFEKGVFDKQGNFLVPPEKSINKIGHALHALDPIFRCVTHSHKVQALARSLGLQMPVVVQSMYIFKQPHFGGEVAPHQDASFLYTEPLGRVLGLWIALEDAMLENGCLWFIPGSHTGGVSRRMVRTPAGSVPGTSFLGSEPIRDNSLFVPTPVLRGALVLIHGEVVHKSEQNLSDRSRQAYTFHLMEAAGTIWSPDNWLQPTPELPFPPLYT</sequence>